<sequence>MLTPIIRKFQYGQHTVTIETGMMARQATAAVMVSMDDTAVFVTVVGQKKAKPGQSFFPLTVNYQERTYAAGRIPGSFFRREGRPSEGETLTSRLIDRPIRPLFPDSFLNEVQVIATVVSVNPQINPDIVALIGASAALSLSGIPFNGPIGAARVGFINDQYVLNPTTDELKESRLDLVVAGTAGAVLMVESEADILSEEQMLGAVVFGHEQQQVVIENINALVAEAGKPKWDWQAEPVNEALHARVAELAEARLGDAYRITEKQERYTQVDAIKADVTEALLAQDDTLDAAEIQDILASVEKNVVRSRVLRGEPRIDGREKDMIRGLDVRTGILPRTHGSALFTRGETQALVTATLGTARDAQNIDELMGERTDSFLLHYNFPPYCVGETGMVGSPKRREIGHGRLAKRGVLAVMPSASEFPYTIRVVSEITESNGSSSMASVCGASLALMDAGVPIKAAVAGIAMGLVKEGDNFVVLSDILGDEDHLGDMDFKVAGSRDGVTALQMDIKIEGITREIMQVALNQAKGARLHILGVMEQAISTPRGDISEFAPRIYTMKINPEKIKDVIGKGGSVIRALTDETGTTIEIEDDGTIKIAATDGDKAKHAIRRIEEITAEIEVGRIYAGKVTRIVDFGAFVAIGGGKEGLVHISQIADKRVEKVTDYLQMGQDVPVKVMEVDRQGRIRLSIKEATTPDAEAPEAAAE</sequence>
<evidence type="ECO:0000255" key="1">
    <source>
        <dbReference type="HAMAP-Rule" id="MF_01595"/>
    </source>
</evidence>
<organism>
    <name type="scientific">Yersinia pseudotuberculosis serotype O:1b (strain IP 31758)</name>
    <dbReference type="NCBI Taxonomy" id="349747"/>
    <lineage>
        <taxon>Bacteria</taxon>
        <taxon>Pseudomonadati</taxon>
        <taxon>Pseudomonadota</taxon>
        <taxon>Gammaproteobacteria</taxon>
        <taxon>Enterobacterales</taxon>
        <taxon>Yersiniaceae</taxon>
        <taxon>Yersinia</taxon>
    </lineage>
</organism>
<comment type="function">
    <text evidence="1">Involved in mRNA degradation. Catalyzes the phosphorolysis of single-stranded polyribonucleotides processively in the 3'- to 5'-direction.</text>
</comment>
<comment type="catalytic activity">
    <reaction evidence="1">
        <text>RNA(n+1) + phosphate = RNA(n) + a ribonucleoside 5'-diphosphate</text>
        <dbReference type="Rhea" id="RHEA:22096"/>
        <dbReference type="Rhea" id="RHEA-COMP:14527"/>
        <dbReference type="Rhea" id="RHEA-COMP:17342"/>
        <dbReference type="ChEBI" id="CHEBI:43474"/>
        <dbReference type="ChEBI" id="CHEBI:57930"/>
        <dbReference type="ChEBI" id="CHEBI:140395"/>
        <dbReference type="EC" id="2.7.7.8"/>
    </reaction>
</comment>
<comment type="cofactor">
    <cofactor evidence="1">
        <name>Mg(2+)</name>
        <dbReference type="ChEBI" id="CHEBI:18420"/>
    </cofactor>
</comment>
<comment type="subunit">
    <text evidence="1">Component of the RNA degradosome, which is a multiprotein complex involved in RNA processing and mRNA degradation.</text>
</comment>
<comment type="subcellular location">
    <subcellularLocation>
        <location evidence="1">Cytoplasm</location>
    </subcellularLocation>
</comment>
<comment type="similarity">
    <text evidence="1">Belongs to the polyribonucleotide nucleotidyltransferase family.</text>
</comment>
<gene>
    <name evidence="1" type="primary">pnp</name>
    <name type="ordered locus">YpsIP31758_3592</name>
</gene>
<proteinExistence type="inferred from homology"/>
<reference key="1">
    <citation type="journal article" date="2007" name="PLoS Genet.">
        <title>The complete genome sequence of Yersinia pseudotuberculosis IP31758, the causative agent of Far East scarlet-like fever.</title>
        <authorList>
            <person name="Eppinger M."/>
            <person name="Rosovitz M.J."/>
            <person name="Fricke W.F."/>
            <person name="Rasko D.A."/>
            <person name="Kokorina G."/>
            <person name="Fayolle C."/>
            <person name="Lindler L.E."/>
            <person name="Carniel E."/>
            <person name="Ravel J."/>
        </authorList>
    </citation>
    <scope>NUCLEOTIDE SEQUENCE [LARGE SCALE GENOMIC DNA]</scope>
    <source>
        <strain>IP 31758</strain>
    </source>
</reference>
<protein>
    <recommendedName>
        <fullName evidence="1">Polyribonucleotide nucleotidyltransferase</fullName>
        <ecNumber evidence="1">2.7.7.8</ecNumber>
    </recommendedName>
    <alternativeName>
        <fullName evidence="1">Polynucleotide phosphorylase</fullName>
        <shortName evidence="1">PNPase</shortName>
    </alternativeName>
</protein>
<dbReference type="EC" id="2.7.7.8" evidence="1"/>
<dbReference type="EMBL" id="CP000720">
    <property type="protein sequence ID" value="ABS47189.1"/>
    <property type="molecule type" value="Genomic_DNA"/>
</dbReference>
<dbReference type="RefSeq" id="WP_002209259.1">
    <property type="nucleotide sequence ID" value="NC_009708.1"/>
</dbReference>
<dbReference type="SMR" id="A7FMR8"/>
<dbReference type="GeneID" id="57975224"/>
<dbReference type="KEGG" id="ypi:YpsIP31758_3592"/>
<dbReference type="HOGENOM" id="CLU_004217_2_2_6"/>
<dbReference type="Proteomes" id="UP000002412">
    <property type="component" value="Chromosome"/>
</dbReference>
<dbReference type="GO" id="GO:0005829">
    <property type="term" value="C:cytosol"/>
    <property type="evidence" value="ECO:0007669"/>
    <property type="project" value="TreeGrafter"/>
</dbReference>
<dbReference type="GO" id="GO:0000175">
    <property type="term" value="F:3'-5'-RNA exonuclease activity"/>
    <property type="evidence" value="ECO:0007669"/>
    <property type="project" value="TreeGrafter"/>
</dbReference>
<dbReference type="GO" id="GO:0000287">
    <property type="term" value="F:magnesium ion binding"/>
    <property type="evidence" value="ECO:0007669"/>
    <property type="project" value="UniProtKB-UniRule"/>
</dbReference>
<dbReference type="GO" id="GO:0004654">
    <property type="term" value="F:polyribonucleotide nucleotidyltransferase activity"/>
    <property type="evidence" value="ECO:0007669"/>
    <property type="project" value="UniProtKB-UniRule"/>
</dbReference>
<dbReference type="GO" id="GO:0003723">
    <property type="term" value="F:RNA binding"/>
    <property type="evidence" value="ECO:0007669"/>
    <property type="project" value="UniProtKB-UniRule"/>
</dbReference>
<dbReference type="GO" id="GO:0006402">
    <property type="term" value="P:mRNA catabolic process"/>
    <property type="evidence" value="ECO:0007669"/>
    <property type="project" value="UniProtKB-UniRule"/>
</dbReference>
<dbReference type="GO" id="GO:0006396">
    <property type="term" value="P:RNA processing"/>
    <property type="evidence" value="ECO:0007669"/>
    <property type="project" value="InterPro"/>
</dbReference>
<dbReference type="CDD" id="cd02393">
    <property type="entry name" value="KH-I_PNPase"/>
    <property type="match status" value="1"/>
</dbReference>
<dbReference type="CDD" id="cd11363">
    <property type="entry name" value="RNase_PH_PNPase_1"/>
    <property type="match status" value="1"/>
</dbReference>
<dbReference type="CDD" id="cd11364">
    <property type="entry name" value="RNase_PH_PNPase_2"/>
    <property type="match status" value="1"/>
</dbReference>
<dbReference type="CDD" id="cd04472">
    <property type="entry name" value="S1_PNPase"/>
    <property type="match status" value="1"/>
</dbReference>
<dbReference type="FunFam" id="2.40.50.140:FF:000023">
    <property type="entry name" value="Polyribonucleotide nucleotidyltransferase"/>
    <property type="match status" value="1"/>
</dbReference>
<dbReference type="FunFam" id="3.30.1370.10:FF:000001">
    <property type="entry name" value="Polyribonucleotide nucleotidyltransferase"/>
    <property type="match status" value="1"/>
</dbReference>
<dbReference type="FunFam" id="3.30.230.70:FF:000001">
    <property type="entry name" value="Polyribonucleotide nucleotidyltransferase"/>
    <property type="match status" value="1"/>
</dbReference>
<dbReference type="FunFam" id="3.30.230.70:FF:000002">
    <property type="entry name" value="Polyribonucleotide nucleotidyltransferase"/>
    <property type="match status" value="1"/>
</dbReference>
<dbReference type="Gene3D" id="3.30.230.70">
    <property type="entry name" value="GHMP Kinase, N-terminal domain"/>
    <property type="match status" value="2"/>
</dbReference>
<dbReference type="Gene3D" id="3.30.1370.10">
    <property type="entry name" value="K Homology domain, type 1"/>
    <property type="match status" value="1"/>
</dbReference>
<dbReference type="Gene3D" id="2.40.50.140">
    <property type="entry name" value="Nucleic acid-binding proteins"/>
    <property type="match status" value="1"/>
</dbReference>
<dbReference type="HAMAP" id="MF_01595">
    <property type="entry name" value="PNPase"/>
    <property type="match status" value="1"/>
</dbReference>
<dbReference type="InterPro" id="IPR001247">
    <property type="entry name" value="ExoRNase_PH_dom1"/>
</dbReference>
<dbReference type="InterPro" id="IPR015847">
    <property type="entry name" value="ExoRNase_PH_dom2"/>
</dbReference>
<dbReference type="InterPro" id="IPR036345">
    <property type="entry name" value="ExoRNase_PH_dom2_sf"/>
</dbReference>
<dbReference type="InterPro" id="IPR004087">
    <property type="entry name" value="KH_dom"/>
</dbReference>
<dbReference type="InterPro" id="IPR004088">
    <property type="entry name" value="KH_dom_type_1"/>
</dbReference>
<dbReference type="InterPro" id="IPR036612">
    <property type="entry name" value="KH_dom_type_1_sf"/>
</dbReference>
<dbReference type="InterPro" id="IPR012340">
    <property type="entry name" value="NA-bd_OB-fold"/>
</dbReference>
<dbReference type="InterPro" id="IPR012162">
    <property type="entry name" value="PNPase"/>
</dbReference>
<dbReference type="InterPro" id="IPR027408">
    <property type="entry name" value="PNPase/RNase_PH_dom_sf"/>
</dbReference>
<dbReference type="InterPro" id="IPR015848">
    <property type="entry name" value="PNPase_PH_RNA-bd_bac/org-type"/>
</dbReference>
<dbReference type="InterPro" id="IPR036456">
    <property type="entry name" value="PNPase_PH_RNA-bd_sf"/>
</dbReference>
<dbReference type="InterPro" id="IPR020568">
    <property type="entry name" value="Ribosomal_Su5_D2-typ_SF"/>
</dbReference>
<dbReference type="InterPro" id="IPR003029">
    <property type="entry name" value="S1_domain"/>
</dbReference>
<dbReference type="NCBIfam" id="TIGR03591">
    <property type="entry name" value="polynuc_phos"/>
    <property type="match status" value="1"/>
</dbReference>
<dbReference type="NCBIfam" id="NF008805">
    <property type="entry name" value="PRK11824.1"/>
    <property type="match status" value="1"/>
</dbReference>
<dbReference type="PANTHER" id="PTHR11252">
    <property type="entry name" value="POLYRIBONUCLEOTIDE NUCLEOTIDYLTRANSFERASE"/>
    <property type="match status" value="1"/>
</dbReference>
<dbReference type="PANTHER" id="PTHR11252:SF0">
    <property type="entry name" value="POLYRIBONUCLEOTIDE NUCLEOTIDYLTRANSFERASE 1, MITOCHONDRIAL"/>
    <property type="match status" value="1"/>
</dbReference>
<dbReference type="Pfam" id="PF00013">
    <property type="entry name" value="KH_1"/>
    <property type="match status" value="1"/>
</dbReference>
<dbReference type="Pfam" id="PF03726">
    <property type="entry name" value="PNPase"/>
    <property type="match status" value="1"/>
</dbReference>
<dbReference type="Pfam" id="PF01138">
    <property type="entry name" value="RNase_PH"/>
    <property type="match status" value="2"/>
</dbReference>
<dbReference type="Pfam" id="PF03725">
    <property type="entry name" value="RNase_PH_C"/>
    <property type="match status" value="2"/>
</dbReference>
<dbReference type="Pfam" id="PF00575">
    <property type="entry name" value="S1"/>
    <property type="match status" value="1"/>
</dbReference>
<dbReference type="PIRSF" id="PIRSF005499">
    <property type="entry name" value="PNPase"/>
    <property type="match status" value="1"/>
</dbReference>
<dbReference type="SMART" id="SM00322">
    <property type="entry name" value="KH"/>
    <property type="match status" value="1"/>
</dbReference>
<dbReference type="SMART" id="SM00316">
    <property type="entry name" value="S1"/>
    <property type="match status" value="1"/>
</dbReference>
<dbReference type="SUPFAM" id="SSF54791">
    <property type="entry name" value="Eukaryotic type KH-domain (KH-domain type I)"/>
    <property type="match status" value="1"/>
</dbReference>
<dbReference type="SUPFAM" id="SSF50249">
    <property type="entry name" value="Nucleic acid-binding proteins"/>
    <property type="match status" value="1"/>
</dbReference>
<dbReference type="SUPFAM" id="SSF46915">
    <property type="entry name" value="Polynucleotide phosphorylase/guanosine pentaphosphate synthase (PNPase/GPSI), domain 3"/>
    <property type="match status" value="1"/>
</dbReference>
<dbReference type="SUPFAM" id="SSF55666">
    <property type="entry name" value="Ribonuclease PH domain 2-like"/>
    <property type="match status" value="2"/>
</dbReference>
<dbReference type="SUPFAM" id="SSF54211">
    <property type="entry name" value="Ribosomal protein S5 domain 2-like"/>
    <property type="match status" value="2"/>
</dbReference>
<dbReference type="PROSITE" id="PS50084">
    <property type="entry name" value="KH_TYPE_1"/>
    <property type="match status" value="1"/>
</dbReference>
<dbReference type="PROSITE" id="PS50126">
    <property type="entry name" value="S1"/>
    <property type="match status" value="1"/>
</dbReference>
<keyword id="KW-0963">Cytoplasm</keyword>
<keyword id="KW-0460">Magnesium</keyword>
<keyword id="KW-0479">Metal-binding</keyword>
<keyword id="KW-0548">Nucleotidyltransferase</keyword>
<keyword id="KW-0694">RNA-binding</keyword>
<keyword id="KW-0808">Transferase</keyword>
<name>PNP_YERP3</name>
<feature type="chain" id="PRO_0000329952" description="Polyribonucleotide nucleotidyltransferase">
    <location>
        <begin position="1"/>
        <end position="705"/>
    </location>
</feature>
<feature type="domain" description="KH" evidence="1">
    <location>
        <begin position="553"/>
        <end position="612"/>
    </location>
</feature>
<feature type="domain" description="S1 motif" evidence="1">
    <location>
        <begin position="622"/>
        <end position="690"/>
    </location>
</feature>
<feature type="binding site" evidence="1">
    <location>
        <position position="486"/>
    </location>
    <ligand>
        <name>Mg(2+)</name>
        <dbReference type="ChEBI" id="CHEBI:18420"/>
    </ligand>
</feature>
<feature type="binding site" evidence="1">
    <location>
        <position position="492"/>
    </location>
    <ligand>
        <name>Mg(2+)</name>
        <dbReference type="ChEBI" id="CHEBI:18420"/>
    </ligand>
</feature>
<accession>A7FMR8</accession>